<organism>
    <name type="scientific">Saccharomyces cerevisiae (strain RM11-1a)</name>
    <name type="common">Baker's yeast</name>
    <dbReference type="NCBI Taxonomy" id="285006"/>
    <lineage>
        <taxon>Eukaryota</taxon>
        <taxon>Fungi</taxon>
        <taxon>Dikarya</taxon>
        <taxon>Ascomycota</taxon>
        <taxon>Saccharomycotina</taxon>
        <taxon>Saccharomycetes</taxon>
        <taxon>Saccharomycetales</taxon>
        <taxon>Saccharomycetaceae</taxon>
        <taxon>Saccharomyces</taxon>
    </lineage>
</organism>
<sequence length="237" mass="27852">MVLQYPQNKILVLSDHPHNFSKTQFLQDLFHCSSTGISIVKDQTWENRYYKVHFDLYIDSCKDIPVWVEEFITPECEPLRNVMAGIILITDIRQTKPQELLHQFMIAAHRNTFVVLVNVNEEVEQDEIDELNEIWSNAFTNVIEFVNWKRSKPTVNHNDYGEKLGLDRIQEIIDTHDWLNCEVLPATKIREEIPNEMPLEQIIRNLQSARLKYKSIENSSEADAFANEMADELSRYL</sequence>
<proteinExistence type="inferred from homology"/>
<feature type="chain" id="PRO_0000399226" description="Increased recombination centers protein 6">
    <location>
        <begin position="1"/>
        <end position="237"/>
    </location>
</feature>
<evidence type="ECO:0000250" key="1"/>
<evidence type="ECO:0000305" key="2"/>
<protein>
    <recommendedName>
        <fullName>Increased recombination centers protein 6</fullName>
    </recommendedName>
</protein>
<dbReference type="EMBL" id="CH408057">
    <property type="protein sequence ID" value="EDV09885.1"/>
    <property type="molecule type" value="Genomic_DNA"/>
</dbReference>
<dbReference type="SMR" id="B3LUQ4"/>
<dbReference type="HOGENOM" id="CLU_079666_0_0_1"/>
<dbReference type="OrthoDB" id="39866at4893"/>
<dbReference type="Proteomes" id="UP000008335">
    <property type="component" value="Unassembled WGS sequence"/>
</dbReference>
<dbReference type="GO" id="GO:0030674">
    <property type="term" value="F:protein-macromolecule adaptor activity"/>
    <property type="evidence" value="ECO:0007669"/>
    <property type="project" value="TreeGrafter"/>
</dbReference>
<dbReference type="GO" id="GO:0016192">
    <property type="term" value="P:vesicle-mediated transport"/>
    <property type="evidence" value="ECO:0007669"/>
    <property type="project" value="InterPro"/>
</dbReference>
<dbReference type="FunFam" id="3.40.50.11960:FF:000002">
    <property type="entry name" value="Increased recombination centers protein 6"/>
    <property type="match status" value="1"/>
</dbReference>
<dbReference type="Gene3D" id="3.40.50.11960">
    <property type="match status" value="1"/>
</dbReference>
<dbReference type="InterPro" id="IPR034627">
    <property type="entry name" value="Irc6"/>
</dbReference>
<dbReference type="PANTHER" id="PTHR28043">
    <property type="entry name" value="INCREASED RECOMBINATION CENTERS PROTEIN 6"/>
    <property type="match status" value="1"/>
</dbReference>
<dbReference type="PANTHER" id="PTHR28043:SF1">
    <property type="entry name" value="INCREASED RECOMBINATION CENTERS PROTEIN 6"/>
    <property type="match status" value="1"/>
</dbReference>
<comment type="function">
    <text evidence="1">Involved in gross chromosomal rearrangements (GCRs) and telomere healing.</text>
</comment>
<comment type="similarity">
    <text evidence="2">Belongs to the IRC6 family.</text>
</comment>
<name>IRC6_YEAS1</name>
<accession>B3LUQ4</accession>
<keyword id="KW-0160">Chromosomal rearrangement</keyword>
<reference key="1">
    <citation type="submission" date="2005-03" db="EMBL/GenBank/DDBJ databases">
        <title>Annotation of the Saccharomyces cerevisiae RM11-1a genome.</title>
        <authorList>
            <consortium name="The Broad Institute Genome Sequencing Platform"/>
            <person name="Birren B.W."/>
            <person name="Lander E.S."/>
            <person name="Galagan J.E."/>
            <person name="Nusbaum C."/>
            <person name="Devon K."/>
            <person name="Cuomo C."/>
            <person name="Jaffe D.B."/>
            <person name="Butler J."/>
            <person name="Alvarez P."/>
            <person name="Gnerre S."/>
            <person name="Grabherr M."/>
            <person name="Kleber M."/>
            <person name="Mauceli E.W."/>
            <person name="Brockman W."/>
            <person name="MacCallum I.A."/>
            <person name="Rounsley S."/>
            <person name="Young S.K."/>
            <person name="LaButti K."/>
            <person name="Pushparaj V."/>
            <person name="DeCaprio D."/>
            <person name="Crawford M."/>
            <person name="Koehrsen M."/>
            <person name="Engels R."/>
            <person name="Montgomery P."/>
            <person name="Pearson M."/>
            <person name="Howarth C."/>
            <person name="Larson L."/>
            <person name="Luoma S."/>
            <person name="White J."/>
            <person name="O'Leary S."/>
            <person name="Kodira C.D."/>
            <person name="Zeng Q."/>
            <person name="Yandava C."/>
            <person name="Alvarado L."/>
            <person name="Pratt S."/>
            <person name="Kruglyak L."/>
        </authorList>
    </citation>
    <scope>NUCLEOTIDE SEQUENCE [LARGE SCALE GENOMIC DNA]</scope>
    <source>
        <strain>RM11-1a</strain>
    </source>
</reference>
<gene>
    <name type="primary">IRC6</name>
    <name type="ORF">SCRG_05593</name>
</gene>